<organism>
    <name type="scientific">Pseudomonas putida (strain ATCC 700007 / DSM 6899 / JCM 31910 / BCRC 17059 / LMG 24140 / F1)</name>
    <dbReference type="NCBI Taxonomy" id="351746"/>
    <lineage>
        <taxon>Bacteria</taxon>
        <taxon>Pseudomonadati</taxon>
        <taxon>Pseudomonadota</taxon>
        <taxon>Gammaproteobacteria</taxon>
        <taxon>Pseudomonadales</taxon>
        <taxon>Pseudomonadaceae</taxon>
        <taxon>Pseudomonas</taxon>
    </lineage>
</organism>
<reference key="1">
    <citation type="submission" date="2007-05" db="EMBL/GenBank/DDBJ databases">
        <title>Complete sequence of Pseudomonas putida F1.</title>
        <authorList>
            <consortium name="US DOE Joint Genome Institute"/>
            <person name="Copeland A."/>
            <person name="Lucas S."/>
            <person name="Lapidus A."/>
            <person name="Barry K."/>
            <person name="Detter J.C."/>
            <person name="Glavina del Rio T."/>
            <person name="Hammon N."/>
            <person name="Israni S."/>
            <person name="Dalin E."/>
            <person name="Tice H."/>
            <person name="Pitluck S."/>
            <person name="Chain P."/>
            <person name="Malfatti S."/>
            <person name="Shin M."/>
            <person name="Vergez L."/>
            <person name="Schmutz J."/>
            <person name="Larimer F."/>
            <person name="Land M."/>
            <person name="Hauser L."/>
            <person name="Kyrpides N."/>
            <person name="Lykidis A."/>
            <person name="Parales R."/>
            <person name="Richardson P."/>
        </authorList>
    </citation>
    <scope>NUCLEOTIDE SEQUENCE [LARGE SCALE GENOMIC DNA]</scope>
    <source>
        <strain>ATCC 700007 / DSM 6899 / JCM 31910 / BCRC 17059 / LMG 24140 / F1</strain>
    </source>
</reference>
<keyword id="KW-0223">Dioxygenase</keyword>
<keyword id="KW-0408">Iron</keyword>
<keyword id="KW-0479">Metal-binding</keyword>
<keyword id="KW-0560">Oxidoreductase</keyword>
<keyword id="KW-0585">Phenylalanine catabolism</keyword>
<keyword id="KW-0828">Tyrosine catabolism</keyword>
<gene>
    <name evidence="1" type="primary">hmgA</name>
    <name type="ordered locus">Pput_4481</name>
</gene>
<proteinExistence type="inferred from homology"/>
<name>HGD_PSEP1</name>
<sequence>MNRDTSPDLHYLSGFGNEFASEALPGALPVGQNSPQKAPYGLYAELLSGTAFTMARSELRRTWLYRIRPSALHPRFERLARQPLGGPLGGINPNRLRWSPQPIPAEPTDFIEGWLPMAANAAAEKPAGVSIYIYCANRSMERVFFNADGELLLVPEQGRLRIATELGVMEVEPLEIAVIPRGMKFRVELLDGQARGYIAENHGAPLRLPDLGPIGSNGLANPRDFLTPVAHYEEAEGPVQLVQKFLGEHWACELQHSPLDVVAWHGSNVPYKYDLRRFNTIGTVSFDHPDPSIFTVLTSPTSVHGMANMDFVIFPPRWMVAENTFRPPWFHRNLMNEFMGLINGAYDAKAEGFLPGGASLHGVMSAHGPDAETCEKAIAADLAPHKIDNTMAFMFETSQVLRPSLQALECPQLQADYDSCWATLPSTFNPNRR</sequence>
<feature type="chain" id="PRO_1000019535" description="Homogentisate 1,2-dioxygenase">
    <location>
        <begin position="1"/>
        <end position="433"/>
    </location>
</feature>
<feature type="active site" description="Proton acceptor" evidence="1">
    <location>
        <position position="288"/>
    </location>
</feature>
<feature type="binding site" evidence="1">
    <location>
        <position position="331"/>
    </location>
    <ligand>
        <name>Fe cation</name>
        <dbReference type="ChEBI" id="CHEBI:24875"/>
    </ligand>
</feature>
<feature type="binding site" evidence="1">
    <location>
        <position position="337"/>
    </location>
    <ligand>
        <name>Fe cation</name>
        <dbReference type="ChEBI" id="CHEBI:24875"/>
    </ligand>
</feature>
<feature type="binding site" evidence="1">
    <location>
        <position position="346"/>
    </location>
    <ligand>
        <name>homogentisate</name>
        <dbReference type="ChEBI" id="CHEBI:16169"/>
    </ligand>
</feature>
<feature type="binding site" evidence="1">
    <location>
        <position position="367"/>
    </location>
    <ligand>
        <name>Fe cation</name>
        <dbReference type="ChEBI" id="CHEBI:24875"/>
    </ligand>
</feature>
<feature type="binding site" evidence="1">
    <location>
        <position position="367"/>
    </location>
    <ligand>
        <name>homogentisate</name>
        <dbReference type="ChEBI" id="CHEBI:16169"/>
    </ligand>
</feature>
<accession>A5W8Z1</accession>
<dbReference type="EC" id="1.13.11.5" evidence="1"/>
<dbReference type="EMBL" id="CP000712">
    <property type="protein sequence ID" value="ABQ80601.1"/>
    <property type="molecule type" value="Genomic_DNA"/>
</dbReference>
<dbReference type="SMR" id="A5W8Z1"/>
<dbReference type="KEGG" id="ppf:Pput_4481"/>
<dbReference type="eggNOG" id="COG3508">
    <property type="taxonomic scope" value="Bacteria"/>
</dbReference>
<dbReference type="HOGENOM" id="CLU_027174_0_0_6"/>
<dbReference type="UniPathway" id="UPA00139">
    <property type="reaction ID" value="UER00339"/>
</dbReference>
<dbReference type="GO" id="GO:0005737">
    <property type="term" value="C:cytoplasm"/>
    <property type="evidence" value="ECO:0007669"/>
    <property type="project" value="TreeGrafter"/>
</dbReference>
<dbReference type="GO" id="GO:0004411">
    <property type="term" value="F:homogentisate 1,2-dioxygenase activity"/>
    <property type="evidence" value="ECO:0007669"/>
    <property type="project" value="UniProtKB-UniRule"/>
</dbReference>
<dbReference type="GO" id="GO:0005506">
    <property type="term" value="F:iron ion binding"/>
    <property type="evidence" value="ECO:0007669"/>
    <property type="project" value="UniProtKB-UniRule"/>
</dbReference>
<dbReference type="GO" id="GO:0006559">
    <property type="term" value="P:L-phenylalanine catabolic process"/>
    <property type="evidence" value="ECO:0007669"/>
    <property type="project" value="UniProtKB-UniRule"/>
</dbReference>
<dbReference type="GO" id="GO:0006572">
    <property type="term" value="P:tyrosine catabolic process"/>
    <property type="evidence" value="ECO:0007669"/>
    <property type="project" value="UniProtKB-UniRule"/>
</dbReference>
<dbReference type="CDD" id="cd07000">
    <property type="entry name" value="cupin_HGO_N"/>
    <property type="match status" value="1"/>
</dbReference>
<dbReference type="FunFam" id="2.60.120.10:FF:000036">
    <property type="entry name" value="Homogentisate 1,2-dioxygenase"/>
    <property type="match status" value="1"/>
</dbReference>
<dbReference type="Gene3D" id="2.60.120.10">
    <property type="entry name" value="Jelly Rolls"/>
    <property type="match status" value="1"/>
</dbReference>
<dbReference type="HAMAP" id="MF_00334">
    <property type="entry name" value="Homogentis_dioxygen"/>
    <property type="match status" value="1"/>
</dbReference>
<dbReference type="InterPro" id="IPR046451">
    <property type="entry name" value="HgmA_C"/>
</dbReference>
<dbReference type="InterPro" id="IPR046452">
    <property type="entry name" value="HgmA_N"/>
</dbReference>
<dbReference type="InterPro" id="IPR005708">
    <property type="entry name" value="Homogentis_dOase"/>
</dbReference>
<dbReference type="InterPro" id="IPR022950">
    <property type="entry name" value="Homogentis_dOase_bac"/>
</dbReference>
<dbReference type="InterPro" id="IPR014710">
    <property type="entry name" value="RmlC-like_jellyroll"/>
</dbReference>
<dbReference type="InterPro" id="IPR011051">
    <property type="entry name" value="RmlC_Cupin_sf"/>
</dbReference>
<dbReference type="NCBIfam" id="TIGR01015">
    <property type="entry name" value="hmgA"/>
    <property type="match status" value="1"/>
</dbReference>
<dbReference type="PANTHER" id="PTHR11056">
    <property type="entry name" value="HOMOGENTISATE 1,2-DIOXYGENASE"/>
    <property type="match status" value="1"/>
</dbReference>
<dbReference type="PANTHER" id="PTHR11056:SF0">
    <property type="entry name" value="HOMOGENTISATE 1,2-DIOXYGENASE"/>
    <property type="match status" value="1"/>
</dbReference>
<dbReference type="Pfam" id="PF04209">
    <property type="entry name" value="HgmA_C"/>
    <property type="match status" value="1"/>
</dbReference>
<dbReference type="Pfam" id="PF20510">
    <property type="entry name" value="HgmA_N"/>
    <property type="match status" value="1"/>
</dbReference>
<dbReference type="SUPFAM" id="SSF51182">
    <property type="entry name" value="RmlC-like cupins"/>
    <property type="match status" value="1"/>
</dbReference>
<comment type="function">
    <text evidence="1">Involved in the catabolism of homogentisate (2,5-dihydroxyphenylacetate or 2,5-OH-PhAc), a central intermediate in the degradation of phenylalanine and tyrosine. Catalyzes the oxidative ring cleavage of the aromatic ring of homogentisate to yield maleylacetoacetate.</text>
</comment>
<comment type="catalytic activity">
    <reaction evidence="1">
        <text>homogentisate + O2 = 4-maleylacetoacetate + H(+)</text>
        <dbReference type="Rhea" id="RHEA:15449"/>
        <dbReference type="ChEBI" id="CHEBI:15378"/>
        <dbReference type="ChEBI" id="CHEBI:15379"/>
        <dbReference type="ChEBI" id="CHEBI:16169"/>
        <dbReference type="ChEBI" id="CHEBI:17105"/>
        <dbReference type="EC" id="1.13.11.5"/>
    </reaction>
</comment>
<comment type="cofactor">
    <cofactor evidence="1">
        <name>Fe cation</name>
        <dbReference type="ChEBI" id="CHEBI:24875"/>
    </cofactor>
</comment>
<comment type="pathway">
    <text evidence="1">Amino-acid degradation; L-phenylalanine degradation; acetoacetate and fumarate from L-phenylalanine: step 4/6.</text>
</comment>
<comment type="subunit">
    <text evidence="1">Hexamer; dimer of trimers.</text>
</comment>
<comment type="similarity">
    <text evidence="1">Belongs to the homogentisate dioxygenase family.</text>
</comment>
<evidence type="ECO:0000255" key="1">
    <source>
        <dbReference type="HAMAP-Rule" id="MF_00334"/>
    </source>
</evidence>
<protein>
    <recommendedName>
        <fullName evidence="1">Homogentisate 1,2-dioxygenase</fullName>
        <shortName evidence="1">HGDO</shortName>
        <ecNumber evidence="1">1.13.11.5</ecNumber>
    </recommendedName>
    <alternativeName>
        <fullName evidence="1">Homogentisate oxygenase</fullName>
    </alternativeName>
    <alternativeName>
        <fullName evidence="1">Homogentisic acid oxidase</fullName>
    </alternativeName>
    <alternativeName>
        <fullName evidence="1">Homogentisicase</fullName>
    </alternativeName>
</protein>